<sequence>MSDSPIELMRSTLAGFQIAPDVKTISNIQDIRAQIQSFREKELEGSQTKFKVLSRKLEISTQAMESLKQTAESSQHAEEILSREKEKFRIAKLLNITENEIMSLESQLQKMKEQLLQLEERENTSEDICQSEENANMLKLNFYHSLGFDLETAENTGNKRVIIHTENDLQTVQISNKYSPYFYSNYFWDLLDDSKDKK</sequence>
<keyword id="KW-0131">Cell cycle</keyword>
<keyword id="KW-0132">Cell division</keyword>
<keyword id="KW-0137">Centromere</keyword>
<keyword id="KW-0158">Chromosome</keyword>
<keyword id="KW-0175">Coiled coil</keyword>
<keyword id="KW-0963">Cytoplasm</keyword>
<keyword id="KW-0206">Cytoskeleton</keyword>
<keyword id="KW-0995">Kinetochore</keyword>
<keyword id="KW-0469">Meiosis</keyword>
<keyword id="KW-0498">Mitosis</keyword>
<keyword id="KW-0539">Nucleus</keyword>
<keyword id="KW-1185">Reference proteome</keyword>
<gene>
    <name type="primary">spc24</name>
    <name type="ORF">SPBC336.08</name>
</gene>
<accession>Q9UST6</accession>
<proteinExistence type="evidence at protein level"/>
<organism>
    <name type="scientific">Schizosaccharomyces pombe (strain 972 / ATCC 24843)</name>
    <name type="common">Fission yeast</name>
    <dbReference type="NCBI Taxonomy" id="284812"/>
    <lineage>
        <taxon>Eukaryota</taxon>
        <taxon>Fungi</taxon>
        <taxon>Dikarya</taxon>
        <taxon>Ascomycota</taxon>
        <taxon>Taphrinomycotina</taxon>
        <taxon>Schizosaccharomycetes</taxon>
        <taxon>Schizosaccharomycetales</taxon>
        <taxon>Schizosaccharomycetaceae</taxon>
        <taxon>Schizosaccharomyces</taxon>
    </lineage>
</organism>
<dbReference type="EMBL" id="CU329671">
    <property type="protein sequence ID" value="CAB58160.1"/>
    <property type="molecule type" value="Genomic_DNA"/>
</dbReference>
<dbReference type="PIR" id="T40246">
    <property type="entry name" value="T40246"/>
</dbReference>
<dbReference type="RefSeq" id="NP_596128.1">
    <property type="nucleotide sequence ID" value="NM_001022046.2"/>
</dbReference>
<dbReference type="SMR" id="Q9UST6"/>
<dbReference type="BioGRID" id="276770">
    <property type="interactions" value="7"/>
</dbReference>
<dbReference type="ComplexPortal" id="CPX-549">
    <property type="entry name" value="Ndc80 complex"/>
</dbReference>
<dbReference type="FunCoup" id="Q9UST6">
    <property type="interactions" value="53"/>
</dbReference>
<dbReference type="IntAct" id="Q9UST6">
    <property type="interactions" value="3"/>
</dbReference>
<dbReference type="STRING" id="284812.Q9UST6"/>
<dbReference type="iPTMnet" id="Q9UST6"/>
<dbReference type="PaxDb" id="4896-SPBC336.08.1"/>
<dbReference type="EnsemblFungi" id="SPBC336.08.1">
    <property type="protein sequence ID" value="SPBC336.08.1:pep"/>
    <property type="gene ID" value="SPBC336.08"/>
</dbReference>
<dbReference type="GeneID" id="2540238"/>
<dbReference type="KEGG" id="spo:2540238"/>
<dbReference type="PomBase" id="SPBC336.08">
    <property type="gene designation" value="spc24"/>
</dbReference>
<dbReference type="VEuPathDB" id="FungiDB:SPBC336.08"/>
<dbReference type="eggNOG" id="ENOG502S52R">
    <property type="taxonomic scope" value="Eukaryota"/>
</dbReference>
<dbReference type="HOGENOM" id="CLU_091441_1_0_1"/>
<dbReference type="InParanoid" id="Q9UST6"/>
<dbReference type="OMA" id="AQCTSHF"/>
<dbReference type="PhylomeDB" id="Q9UST6"/>
<dbReference type="CD-CODE" id="576F0A76">
    <property type="entry name" value="Centrosome"/>
</dbReference>
<dbReference type="PRO" id="PR:Q9UST6"/>
<dbReference type="Proteomes" id="UP000002485">
    <property type="component" value="Chromosome II"/>
</dbReference>
<dbReference type="GO" id="GO:0000775">
    <property type="term" value="C:chromosome, centromeric region"/>
    <property type="evidence" value="ECO:0000314"/>
    <property type="project" value="PomBase"/>
</dbReference>
<dbReference type="GO" id="GO:0000779">
    <property type="term" value="C:condensed chromosome, centromeric region"/>
    <property type="evidence" value="ECO:0000314"/>
    <property type="project" value="PomBase"/>
</dbReference>
<dbReference type="GO" id="GO:0005829">
    <property type="term" value="C:cytosol"/>
    <property type="evidence" value="ECO:0007005"/>
    <property type="project" value="PomBase"/>
</dbReference>
<dbReference type="GO" id="GO:0000776">
    <property type="term" value="C:kinetochore"/>
    <property type="evidence" value="ECO:0000314"/>
    <property type="project" value="PomBase"/>
</dbReference>
<dbReference type="GO" id="GO:0031262">
    <property type="term" value="C:Ndc80 complex"/>
    <property type="evidence" value="ECO:0000314"/>
    <property type="project" value="PomBase"/>
</dbReference>
<dbReference type="GO" id="GO:0005634">
    <property type="term" value="C:nucleus"/>
    <property type="evidence" value="ECO:0000305"/>
    <property type="project" value="PomBase"/>
</dbReference>
<dbReference type="GO" id="GO:0005816">
    <property type="term" value="C:spindle pole body"/>
    <property type="evidence" value="ECO:0007669"/>
    <property type="project" value="UniProtKB-SubCell"/>
</dbReference>
<dbReference type="GO" id="GO:0008608">
    <property type="term" value="P:attachment of spindle microtubules to kinetochore"/>
    <property type="evidence" value="ECO:0000303"/>
    <property type="project" value="ComplexPortal"/>
</dbReference>
<dbReference type="GO" id="GO:0051301">
    <property type="term" value="P:cell division"/>
    <property type="evidence" value="ECO:0007669"/>
    <property type="project" value="UniProtKB-KW"/>
</dbReference>
<dbReference type="GO" id="GO:0007059">
    <property type="term" value="P:chromosome segregation"/>
    <property type="evidence" value="ECO:0000318"/>
    <property type="project" value="GO_Central"/>
</dbReference>
<dbReference type="GO" id="GO:1990571">
    <property type="term" value="P:meiotic centromere clustering"/>
    <property type="evidence" value="ECO:0000269"/>
    <property type="project" value="PomBase"/>
</dbReference>
<dbReference type="GO" id="GO:0000070">
    <property type="term" value="P:mitotic sister chromatid segregation"/>
    <property type="evidence" value="ECO:0000305"/>
    <property type="project" value="PomBase"/>
</dbReference>
<dbReference type="GO" id="GO:0031134">
    <property type="term" value="P:sister chromatid biorientation"/>
    <property type="evidence" value="ECO:0000250"/>
    <property type="project" value="UniProtKB"/>
</dbReference>
<dbReference type="GO" id="GO:0051455">
    <property type="term" value="P:spindle attachment to meiosis I kinetochore"/>
    <property type="evidence" value="ECO:0000305"/>
    <property type="project" value="PomBase"/>
</dbReference>
<dbReference type="CDD" id="cd11565">
    <property type="entry name" value="RWD_Spc24"/>
    <property type="match status" value="1"/>
</dbReference>
<dbReference type="Gene3D" id="3.30.160.430">
    <property type="match status" value="1"/>
</dbReference>
<dbReference type="InterPro" id="IPR013252">
    <property type="entry name" value="Ndc80_Spc24"/>
</dbReference>
<dbReference type="InterPro" id="IPR038066">
    <property type="entry name" value="Spc24_Fungi_globular_sf"/>
</dbReference>
<dbReference type="PANTHER" id="PTHR22142">
    <property type="match status" value="1"/>
</dbReference>
<dbReference type="PANTHER" id="PTHR22142:SF2">
    <property type="entry name" value="KINETOCHORE PROTEIN SPC24"/>
    <property type="match status" value="1"/>
</dbReference>
<dbReference type="Pfam" id="PF08286">
    <property type="entry name" value="Spc24"/>
    <property type="match status" value="1"/>
</dbReference>
<dbReference type="SUPFAM" id="SSF143026">
    <property type="entry name" value="Kinetochore globular domain"/>
    <property type="match status" value="1"/>
</dbReference>
<reference key="1">
    <citation type="journal article" date="2002" name="Nature">
        <title>The genome sequence of Schizosaccharomyces pombe.</title>
        <authorList>
            <person name="Wood V."/>
            <person name="Gwilliam R."/>
            <person name="Rajandream M.A."/>
            <person name="Lyne M.H."/>
            <person name="Lyne R."/>
            <person name="Stewart A."/>
            <person name="Sgouros J.G."/>
            <person name="Peat N."/>
            <person name="Hayles J."/>
            <person name="Baker S.G."/>
            <person name="Basham D."/>
            <person name="Bowman S."/>
            <person name="Brooks K."/>
            <person name="Brown D."/>
            <person name="Brown S."/>
            <person name="Chillingworth T."/>
            <person name="Churcher C.M."/>
            <person name="Collins M."/>
            <person name="Connor R."/>
            <person name="Cronin A."/>
            <person name="Davis P."/>
            <person name="Feltwell T."/>
            <person name="Fraser A."/>
            <person name="Gentles S."/>
            <person name="Goble A."/>
            <person name="Hamlin N."/>
            <person name="Harris D.E."/>
            <person name="Hidalgo J."/>
            <person name="Hodgson G."/>
            <person name="Holroyd S."/>
            <person name="Hornsby T."/>
            <person name="Howarth S."/>
            <person name="Huckle E.J."/>
            <person name="Hunt S."/>
            <person name="Jagels K."/>
            <person name="James K.D."/>
            <person name="Jones L."/>
            <person name="Jones M."/>
            <person name="Leather S."/>
            <person name="McDonald S."/>
            <person name="McLean J."/>
            <person name="Mooney P."/>
            <person name="Moule S."/>
            <person name="Mungall K.L."/>
            <person name="Murphy L.D."/>
            <person name="Niblett D."/>
            <person name="Odell C."/>
            <person name="Oliver K."/>
            <person name="O'Neil S."/>
            <person name="Pearson D."/>
            <person name="Quail M.A."/>
            <person name="Rabbinowitsch E."/>
            <person name="Rutherford K.M."/>
            <person name="Rutter S."/>
            <person name="Saunders D."/>
            <person name="Seeger K."/>
            <person name="Sharp S."/>
            <person name="Skelton J."/>
            <person name="Simmonds M.N."/>
            <person name="Squares R."/>
            <person name="Squares S."/>
            <person name="Stevens K."/>
            <person name="Taylor K."/>
            <person name="Taylor R.G."/>
            <person name="Tivey A."/>
            <person name="Walsh S.V."/>
            <person name="Warren T."/>
            <person name="Whitehead S."/>
            <person name="Woodward J.R."/>
            <person name="Volckaert G."/>
            <person name="Aert R."/>
            <person name="Robben J."/>
            <person name="Grymonprez B."/>
            <person name="Weltjens I."/>
            <person name="Vanstreels E."/>
            <person name="Rieger M."/>
            <person name="Schaefer M."/>
            <person name="Mueller-Auer S."/>
            <person name="Gabel C."/>
            <person name="Fuchs M."/>
            <person name="Duesterhoeft A."/>
            <person name="Fritzc C."/>
            <person name="Holzer E."/>
            <person name="Moestl D."/>
            <person name="Hilbert H."/>
            <person name="Borzym K."/>
            <person name="Langer I."/>
            <person name="Beck A."/>
            <person name="Lehrach H."/>
            <person name="Reinhardt R."/>
            <person name="Pohl T.M."/>
            <person name="Eger P."/>
            <person name="Zimmermann W."/>
            <person name="Wedler H."/>
            <person name="Wambutt R."/>
            <person name="Purnelle B."/>
            <person name="Goffeau A."/>
            <person name="Cadieu E."/>
            <person name="Dreano S."/>
            <person name="Gloux S."/>
            <person name="Lelaure V."/>
            <person name="Mottier S."/>
            <person name="Galibert F."/>
            <person name="Aves S.J."/>
            <person name="Xiang Z."/>
            <person name="Hunt C."/>
            <person name="Moore K."/>
            <person name="Hurst S.M."/>
            <person name="Lucas M."/>
            <person name="Rochet M."/>
            <person name="Gaillardin C."/>
            <person name="Tallada V.A."/>
            <person name="Garzon A."/>
            <person name="Thode G."/>
            <person name="Daga R.R."/>
            <person name="Cruzado L."/>
            <person name="Jimenez J."/>
            <person name="Sanchez M."/>
            <person name="del Rey F."/>
            <person name="Benito J."/>
            <person name="Dominguez A."/>
            <person name="Revuelta J.L."/>
            <person name="Moreno S."/>
            <person name="Armstrong J."/>
            <person name="Forsburg S.L."/>
            <person name="Cerutti L."/>
            <person name="Lowe T."/>
            <person name="McCombie W.R."/>
            <person name="Paulsen I."/>
            <person name="Potashkin J."/>
            <person name="Shpakovski G.V."/>
            <person name="Ussery D."/>
            <person name="Barrell B.G."/>
            <person name="Nurse P."/>
        </authorList>
    </citation>
    <scope>NUCLEOTIDE SEQUENCE [LARGE SCALE GENOMIC DNA]</scope>
    <source>
        <strain>972 / ATCC 24843</strain>
    </source>
</reference>
<reference key="2">
    <citation type="journal article" date="2005" name="EMBO J.">
        <title>Molecular analysis of kinetochore architecture in fission yeast.</title>
        <authorList>
            <person name="Liu X."/>
            <person name="McLeod I."/>
            <person name="Anderson S."/>
            <person name="Yates J.R. III"/>
            <person name="He X."/>
        </authorList>
    </citation>
    <scope>IDENTIFICATION IN THE NDC80 COMPLEX</scope>
    <scope>IDENTIFICATION IN THE NMS COMPLEX</scope>
</reference>
<reference evidence="6" key="3">
    <citation type="journal article" date="2005" name="Mol. Biol. Cell">
        <title>Dissociation of the Nuf2-Ndc80 complex releases centromeres from the spindle-pole body during meiotic prophase in fission yeast.</title>
        <authorList>
            <person name="Asakawa H."/>
            <person name="Hayashi A."/>
            <person name="Haraguchi T."/>
            <person name="Hiraoka Y."/>
        </authorList>
    </citation>
    <scope>FUNCTION OF THE NDC80 COMPLEX</scope>
    <scope>SELF-ASSOCIATION</scope>
    <scope>INTERACTION WITH NDC80 AND SPC25</scope>
    <scope>SUBCELLULAR LOCATION</scope>
</reference>
<reference key="4">
    <citation type="journal article" date="2006" name="Mol. Biol. Cell">
        <title>Reconstruction of the kinetochore during meiosis in fission yeast Schizosaccharomyces pombe.</title>
        <authorList>
            <person name="Hayashi A."/>
            <person name="Asakawa H."/>
            <person name="Haraguchi T."/>
            <person name="Hiraoka Y."/>
        </authorList>
    </citation>
    <scope>IDENTIFICATION IN THE NMS COMPLEX</scope>
</reference>
<reference evidence="6" key="5">
    <citation type="journal article" date="2006" name="Nat. Biotechnol.">
        <title>ORFeome cloning and global analysis of protein localization in the fission yeast Schizosaccharomyces pombe.</title>
        <authorList>
            <person name="Matsuyama A."/>
            <person name="Arai R."/>
            <person name="Yashiroda Y."/>
            <person name="Shirai A."/>
            <person name="Kamata A."/>
            <person name="Sekido S."/>
            <person name="Kobayashi Y."/>
            <person name="Hashimoto A."/>
            <person name="Hamamoto M."/>
            <person name="Hiraoka Y."/>
            <person name="Horinouchi S."/>
            <person name="Yoshida M."/>
        </authorList>
    </citation>
    <scope>SUBCELLULAR LOCATION [LARGE SCALE ANALYSIS]</scope>
</reference>
<name>SPC24_SCHPO</name>
<evidence type="ECO:0000255" key="1"/>
<evidence type="ECO:0000269" key="2">
    <source>
    </source>
</evidence>
<evidence type="ECO:0000269" key="3">
    <source>
    </source>
</evidence>
<evidence type="ECO:0000269" key="4">
    <source>
    </source>
</evidence>
<evidence type="ECO:0000269" key="5">
    <source>
    </source>
</evidence>
<evidence type="ECO:0000305" key="6"/>
<comment type="function">
    <text evidence="2">Acts as a component of the NMS (Ndc80-MIND-Spc7) super complex which has a role in kinetochore function during late meiotic prophase and throughout the mitotic cell cycle. Acts as a component of the essential kinetochore-associated NDC80 complex, which is required for chromosome segregation and spindle checkpoint activity.</text>
</comment>
<comment type="subunit">
    <text evidence="3 5">Component of the NDC80 complex, which consists of ndc80, nuf2, spc24 and spc25. Can self-associate. Component of the NMS super complex which consists of mis12, mis13, mis14, ndc80, nnf1, nuf2, sos7, spc7, spc24 and spc25.</text>
</comment>
<comment type="interaction">
    <interactant intactId="EBI-1002585">
        <id>Q9UST6</id>
    </interactant>
    <interactant intactId="EBI-1002524">
        <id>Q10198</id>
        <label>ndc80</label>
    </interactant>
    <organismsDiffer>false</organismsDiffer>
    <experiments>3</experiments>
</comment>
<comment type="subcellular location">
    <subcellularLocation>
        <location evidence="2">Nucleus</location>
    </subcellularLocation>
    <subcellularLocation>
        <location evidence="2">Chromosome</location>
        <location evidence="2">Centromere</location>
        <location evidence="2">Kinetochore</location>
    </subcellularLocation>
    <subcellularLocation>
        <location evidence="4">Cytoplasm</location>
        <location evidence="4">Cytoskeleton</location>
        <location evidence="4">Microtubule organizing center</location>
        <location evidence="4">Spindle pole body</location>
    </subcellularLocation>
    <text evidence="2">Associated with kinetochores.</text>
</comment>
<comment type="similarity">
    <text evidence="6">Belongs to the SPC24 family.</text>
</comment>
<protein>
    <recommendedName>
        <fullName>Kinetochore protein spc24</fullName>
    </recommendedName>
</protein>
<feature type="chain" id="PRO_0000246667" description="Kinetochore protein spc24">
    <location>
        <begin position="1"/>
        <end position="198"/>
    </location>
</feature>
<feature type="coiled-coil region" evidence="1">
    <location>
        <begin position="51"/>
        <end position="130"/>
    </location>
</feature>